<keyword id="KW-1003">Cell membrane</keyword>
<keyword id="KW-0472">Membrane</keyword>
<keyword id="KW-0653">Protein transport</keyword>
<keyword id="KW-1185">Reference proteome</keyword>
<keyword id="KW-0811">Translocation</keyword>
<keyword id="KW-0812">Transmembrane</keyword>
<keyword id="KW-1133">Transmembrane helix</keyword>
<keyword id="KW-0813">Transport</keyword>
<reference key="1">
    <citation type="journal article" date="1996" name="Science">
        <title>Complete genome sequence of the methanogenic archaeon, Methanococcus jannaschii.</title>
        <authorList>
            <person name="Bult C.J."/>
            <person name="White O."/>
            <person name="Olsen G.J."/>
            <person name="Zhou L."/>
            <person name="Fleischmann R.D."/>
            <person name="Sutton G.G."/>
            <person name="Blake J.A."/>
            <person name="FitzGerald L.M."/>
            <person name="Clayton R.A."/>
            <person name="Gocayne J.D."/>
            <person name="Kerlavage A.R."/>
            <person name="Dougherty B.A."/>
            <person name="Tomb J.-F."/>
            <person name="Adams M.D."/>
            <person name="Reich C.I."/>
            <person name="Overbeek R."/>
            <person name="Kirkness E.F."/>
            <person name="Weinstock K.G."/>
            <person name="Merrick J.M."/>
            <person name="Glodek A."/>
            <person name="Scott J.L."/>
            <person name="Geoghagen N.S.M."/>
            <person name="Weidman J.F."/>
            <person name="Fuhrmann J.L."/>
            <person name="Nguyen D."/>
            <person name="Utterback T.R."/>
            <person name="Kelley J.M."/>
            <person name="Peterson J.D."/>
            <person name="Sadow P.W."/>
            <person name="Hanna M.C."/>
            <person name="Cotton M.D."/>
            <person name="Roberts K.M."/>
            <person name="Hurst M.A."/>
            <person name="Kaine B.P."/>
            <person name="Borodovsky M."/>
            <person name="Klenk H.-P."/>
            <person name="Fraser C.M."/>
            <person name="Smith H.O."/>
            <person name="Woese C.R."/>
            <person name="Venter J.C."/>
        </authorList>
    </citation>
    <scope>NUCLEOTIDE SEQUENCE [LARGE SCALE GENOMIC DNA]</scope>
    <source>
        <strain>ATCC 43067 / DSM 2661 / JAL-1 / JCM 10045 / NBRC 100440</strain>
    </source>
</reference>
<feature type="chain" id="PRO_0000095991" description="Protein-export membrane protein SecF">
    <location>
        <begin position="1"/>
        <end position="282"/>
    </location>
</feature>
<feature type="transmembrane region" description="Helical" evidence="1">
    <location>
        <begin position="9"/>
        <end position="29"/>
    </location>
</feature>
<feature type="transmembrane region" description="Helical" evidence="1">
    <location>
        <begin position="120"/>
        <end position="140"/>
    </location>
</feature>
<feature type="transmembrane region" description="Helical" evidence="1">
    <location>
        <begin position="149"/>
        <end position="169"/>
    </location>
</feature>
<feature type="transmembrane region" description="Helical" evidence="1">
    <location>
        <begin position="174"/>
        <end position="194"/>
    </location>
</feature>
<feature type="transmembrane region" description="Helical" evidence="1">
    <location>
        <begin position="214"/>
        <end position="234"/>
    </location>
</feature>
<feature type="transmembrane region" description="Helical" evidence="1">
    <location>
        <begin position="236"/>
        <end position="256"/>
    </location>
</feature>
<accession>Q58650</accession>
<protein>
    <recommendedName>
        <fullName evidence="1">Protein-export membrane protein SecF</fullName>
    </recommendedName>
</protein>
<dbReference type="EMBL" id="L77117">
    <property type="protein sequence ID" value="AAB99256.1"/>
    <property type="molecule type" value="Genomic_DNA"/>
</dbReference>
<dbReference type="PIR" id="D64456">
    <property type="entry name" value="D64456"/>
</dbReference>
<dbReference type="RefSeq" id="WP_010870766.1">
    <property type="nucleotide sequence ID" value="NC_000909.1"/>
</dbReference>
<dbReference type="SMR" id="Q58650"/>
<dbReference type="FunCoup" id="Q58650">
    <property type="interactions" value="7"/>
</dbReference>
<dbReference type="STRING" id="243232.MJ_1253"/>
<dbReference type="PaxDb" id="243232-MJ_1253"/>
<dbReference type="EnsemblBacteria" id="AAB99256">
    <property type="protein sequence ID" value="AAB99256"/>
    <property type="gene ID" value="MJ_1253"/>
</dbReference>
<dbReference type="GeneID" id="1452151"/>
<dbReference type="KEGG" id="mja:MJ_1253"/>
<dbReference type="eggNOG" id="arCOG03054">
    <property type="taxonomic scope" value="Archaea"/>
</dbReference>
<dbReference type="HOGENOM" id="CLU_060478_0_0_2"/>
<dbReference type="InParanoid" id="Q58650"/>
<dbReference type="OrthoDB" id="85411at2157"/>
<dbReference type="PhylomeDB" id="Q58650"/>
<dbReference type="Proteomes" id="UP000000805">
    <property type="component" value="Chromosome"/>
</dbReference>
<dbReference type="GO" id="GO:0005886">
    <property type="term" value="C:plasma membrane"/>
    <property type="evidence" value="ECO:0000318"/>
    <property type="project" value="GO_Central"/>
</dbReference>
<dbReference type="GO" id="GO:0065002">
    <property type="term" value="P:intracellular protein transmembrane transport"/>
    <property type="evidence" value="ECO:0007669"/>
    <property type="project" value="UniProtKB-UniRule"/>
</dbReference>
<dbReference type="GO" id="GO:0006605">
    <property type="term" value="P:protein targeting"/>
    <property type="evidence" value="ECO:0007669"/>
    <property type="project" value="UniProtKB-UniRule"/>
</dbReference>
<dbReference type="GO" id="GO:0015031">
    <property type="term" value="P:protein transport"/>
    <property type="evidence" value="ECO:0000318"/>
    <property type="project" value="GO_Central"/>
</dbReference>
<dbReference type="Gene3D" id="1.20.1640.10">
    <property type="entry name" value="Multidrug efflux transporter AcrB transmembrane domain"/>
    <property type="match status" value="1"/>
</dbReference>
<dbReference type="HAMAP" id="MF_01464_A">
    <property type="entry name" value="SecF_A"/>
    <property type="match status" value="1"/>
</dbReference>
<dbReference type="InterPro" id="IPR022813">
    <property type="entry name" value="SecD/SecF_arch_bac"/>
</dbReference>
<dbReference type="InterPro" id="IPR022646">
    <property type="entry name" value="SecD/SecF_CS"/>
</dbReference>
<dbReference type="InterPro" id="IPR048634">
    <property type="entry name" value="SecD_SecF_C"/>
</dbReference>
<dbReference type="InterPro" id="IPR024921">
    <property type="entry name" value="SecF_arc"/>
</dbReference>
<dbReference type="NCBIfam" id="NF006353">
    <property type="entry name" value="PRK08578.1-1"/>
    <property type="match status" value="1"/>
</dbReference>
<dbReference type="NCBIfam" id="NF006357">
    <property type="entry name" value="PRK08578.2-1"/>
    <property type="match status" value="1"/>
</dbReference>
<dbReference type="PANTHER" id="PTHR30081:SF8">
    <property type="entry name" value="PROTEIN TRANSLOCASE SUBUNIT SECF"/>
    <property type="match status" value="1"/>
</dbReference>
<dbReference type="PANTHER" id="PTHR30081">
    <property type="entry name" value="PROTEIN-EXPORT MEMBRANE PROTEIN SEC"/>
    <property type="match status" value="1"/>
</dbReference>
<dbReference type="Pfam" id="PF07549">
    <property type="entry name" value="Sec_GG"/>
    <property type="match status" value="1"/>
</dbReference>
<dbReference type="Pfam" id="PF02355">
    <property type="entry name" value="SecD_SecF_C"/>
    <property type="match status" value="1"/>
</dbReference>
<dbReference type="SUPFAM" id="SSF82866">
    <property type="entry name" value="Multidrug efflux transporter AcrB transmembrane domain"/>
    <property type="match status" value="1"/>
</dbReference>
<organism>
    <name type="scientific">Methanocaldococcus jannaschii (strain ATCC 43067 / DSM 2661 / JAL-1 / JCM 10045 / NBRC 100440)</name>
    <name type="common">Methanococcus jannaschii</name>
    <dbReference type="NCBI Taxonomy" id="243232"/>
    <lineage>
        <taxon>Archaea</taxon>
        <taxon>Methanobacteriati</taxon>
        <taxon>Methanobacteriota</taxon>
        <taxon>Methanomada group</taxon>
        <taxon>Methanococci</taxon>
        <taxon>Methanococcales</taxon>
        <taxon>Methanocaldococcaceae</taxon>
        <taxon>Methanocaldococcus</taxon>
    </lineage>
</organism>
<comment type="function">
    <text evidence="1">Involved in protein export.</text>
</comment>
<comment type="subunit">
    <text evidence="1">Part of the protein translocation apparatus. Forms a complex with SecD.</text>
</comment>
<comment type="subcellular location">
    <subcellularLocation>
        <location evidence="1">Cell membrane</location>
        <topology evidence="1">Multi-pass membrane protein</topology>
    </subcellularLocation>
</comment>
<comment type="similarity">
    <text evidence="1">Belongs to the SecD/SecF family. SecF subfamily.</text>
</comment>
<gene>
    <name evidence="1" type="primary">secF</name>
    <name type="ordered locus">MJ1253</name>
</gene>
<proteinExistence type="inferred from homology"/>
<sequence>MIKDYKVSIAIPIALLILSILLIGFKGIPKSIDITGGTEITIKVNENMDITPLKESLNGIAEVKKLESADGYYIVIRCKNEDVDIVKQKIKEFFHVDSLDKLNYSEKTIGATLSSKFFEEGFKAVGFAFMFMAIVVYLYFRNPVPSGAIILSALSDIIMALGAMSLLGIELSSATIAALLMVIGYSVDSDILLTTRVLKRLTKSFDETVKEAMKTGLTMTLTTITAMLILLIVVKLFIPVADILANIATVLILALIADIINTWLLNAGILKYYITEYRAKKI</sequence>
<name>SECF_METJA</name>
<evidence type="ECO:0000255" key="1">
    <source>
        <dbReference type="HAMAP-Rule" id="MF_01464"/>
    </source>
</evidence>